<accession>P34188</accession>
<reference key="1">
    <citation type="journal article" date="1992" name="Nucleic Acids Res.">
        <title>The complete nucleotide sequence of the Crossostoma lacustre mitochondrial genome: conservation and variations among vertebrates.</title>
        <authorList>
            <person name="Tzeng C.-S."/>
            <person name="Hui C.-F."/>
            <person name="Shen S.-C."/>
            <person name="Huang P.C."/>
        </authorList>
    </citation>
    <scope>NUCLEOTIDE SEQUENCE [GENOMIC DNA]</scope>
    <source>
        <tissue>Oocyte</tissue>
    </source>
</reference>
<feature type="chain" id="PRO_0000183318" description="Cytochrome c oxidase subunit 1">
    <location>
        <begin position="1"/>
        <end position="516"/>
    </location>
</feature>
<feature type="topological domain" description="Mitochondrial matrix" evidence="2">
    <location>
        <begin position="1"/>
        <end position="11"/>
    </location>
</feature>
<feature type="transmembrane region" description="Helical; Name=I" evidence="2">
    <location>
        <begin position="12"/>
        <end position="40"/>
    </location>
</feature>
<feature type="topological domain" description="Mitochondrial intermembrane" evidence="2">
    <location>
        <begin position="41"/>
        <end position="50"/>
    </location>
</feature>
<feature type="transmembrane region" description="Helical; Name=II" evidence="2">
    <location>
        <begin position="51"/>
        <end position="86"/>
    </location>
</feature>
<feature type="topological domain" description="Mitochondrial matrix" evidence="2">
    <location>
        <begin position="87"/>
        <end position="94"/>
    </location>
</feature>
<feature type="transmembrane region" description="Helical; Name=III" evidence="2">
    <location>
        <begin position="95"/>
        <end position="117"/>
    </location>
</feature>
<feature type="topological domain" description="Mitochondrial intermembrane" evidence="2">
    <location>
        <begin position="118"/>
        <end position="140"/>
    </location>
</feature>
<feature type="transmembrane region" description="Helical; Name=IV" evidence="2">
    <location>
        <begin position="141"/>
        <end position="170"/>
    </location>
</feature>
<feature type="topological domain" description="Mitochondrial matrix" evidence="2">
    <location>
        <begin position="171"/>
        <end position="182"/>
    </location>
</feature>
<feature type="transmembrane region" description="Helical; Name=V" evidence="2">
    <location>
        <begin position="183"/>
        <end position="212"/>
    </location>
</feature>
<feature type="topological domain" description="Mitochondrial intermembrane" evidence="2">
    <location>
        <begin position="213"/>
        <end position="227"/>
    </location>
</feature>
<feature type="transmembrane region" description="Helical; Name=VI" evidence="2">
    <location>
        <begin position="228"/>
        <end position="261"/>
    </location>
</feature>
<feature type="topological domain" description="Mitochondrial matrix" evidence="2">
    <location>
        <begin position="262"/>
        <end position="269"/>
    </location>
</feature>
<feature type="transmembrane region" description="Helical; Name=VII" evidence="2">
    <location>
        <begin position="270"/>
        <end position="286"/>
    </location>
</feature>
<feature type="topological domain" description="Mitochondrial intermembrane" evidence="2">
    <location>
        <begin position="287"/>
        <end position="298"/>
    </location>
</feature>
<feature type="transmembrane region" description="Helical; Name=VIII" evidence="2">
    <location>
        <begin position="299"/>
        <end position="327"/>
    </location>
</feature>
<feature type="topological domain" description="Mitochondrial matrix" evidence="2">
    <location>
        <begin position="328"/>
        <end position="335"/>
    </location>
</feature>
<feature type="transmembrane region" description="Helical; Name=IX" evidence="2">
    <location>
        <begin position="336"/>
        <end position="357"/>
    </location>
</feature>
<feature type="topological domain" description="Mitochondrial intermembrane" evidence="2">
    <location>
        <begin position="358"/>
        <end position="370"/>
    </location>
</feature>
<feature type="transmembrane region" description="Helical; Name=X" evidence="2">
    <location>
        <begin position="371"/>
        <end position="400"/>
    </location>
</feature>
<feature type="topological domain" description="Mitochondrial matrix" evidence="2">
    <location>
        <begin position="401"/>
        <end position="406"/>
    </location>
</feature>
<feature type="transmembrane region" description="Helical; Name=XI" evidence="2">
    <location>
        <begin position="407"/>
        <end position="433"/>
    </location>
</feature>
<feature type="topological domain" description="Mitochondrial intermembrane" evidence="2">
    <location>
        <begin position="434"/>
        <end position="446"/>
    </location>
</feature>
<feature type="transmembrane region" description="Helical; Name=XII" evidence="2">
    <location>
        <begin position="447"/>
        <end position="478"/>
    </location>
</feature>
<feature type="topological domain" description="Mitochondrial matrix" evidence="2">
    <location>
        <begin position="479"/>
        <end position="516"/>
    </location>
</feature>
<feature type="binding site" evidence="2">
    <location>
        <position position="40"/>
    </location>
    <ligand>
        <name>Na(+)</name>
        <dbReference type="ChEBI" id="CHEBI:29101"/>
    </ligand>
</feature>
<feature type="binding site" evidence="2">
    <location>
        <position position="45"/>
    </location>
    <ligand>
        <name>Na(+)</name>
        <dbReference type="ChEBI" id="CHEBI:29101"/>
    </ligand>
</feature>
<feature type="binding site" description="axial binding residue" evidence="2">
    <location>
        <position position="61"/>
    </location>
    <ligand>
        <name>Fe(II)-heme a</name>
        <dbReference type="ChEBI" id="CHEBI:61715"/>
        <note>low-spin</note>
    </ligand>
    <ligandPart>
        <name>Fe</name>
        <dbReference type="ChEBI" id="CHEBI:18248"/>
    </ligandPart>
</feature>
<feature type="binding site" evidence="2">
    <location>
        <position position="240"/>
    </location>
    <ligand>
        <name>Cu cation</name>
        <dbReference type="ChEBI" id="CHEBI:23378"/>
        <label>B</label>
    </ligand>
</feature>
<feature type="binding site" evidence="2">
    <location>
        <position position="244"/>
    </location>
    <ligand>
        <name>O2</name>
        <dbReference type="ChEBI" id="CHEBI:15379"/>
    </ligand>
</feature>
<feature type="binding site" evidence="2">
    <location>
        <position position="290"/>
    </location>
    <ligand>
        <name>Cu cation</name>
        <dbReference type="ChEBI" id="CHEBI:23378"/>
        <label>B</label>
    </ligand>
</feature>
<feature type="binding site" evidence="2">
    <location>
        <position position="291"/>
    </location>
    <ligand>
        <name>Cu cation</name>
        <dbReference type="ChEBI" id="CHEBI:23378"/>
        <label>B</label>
    </ligand>
</feature>
<feature type="binding site" evidence="2">
    <location>
        <position position="368"/>
    </location>
    <ligand>
        <name>Mg(2+)</name>
        <dbReference type="ChEBI" id="CHEBI:18420"/>
        <note>ligand shared with MT-CO2</note>
    </ligand>
</feature>
<feature type="binding site" evidence="2">
    <location>
        <position position="369"/>
    </location>
    <ligand>
        <name>Mg(2+)</name>
        <dbReference type="ChEBI" id="CHEBI:18420"/>
        <note>ligand shared with MT-CO2</note>
    </ligand>
</feature>
<feature type="binding site" description="axial binding residue" evidence="2">
    <location>
        <position position="376"/>
    </location>
    <ligand>
        <name>heme a3</name>
        <dbReference type="ChEBI" id="CHEBI:83282"/>
        <note>high-spin</note>
    </ligand>
    <ligandPart>
        <name>Fe</name>
        <dbReference type="ChEBI" id="CHEBI:18248"/>
    </ligandPart>
</feature>
<feature type="binding site" description="axial binding residue" evidence="2">
    <location>
        <position position="378"/>
    </location>
    <ligand>
        <name>Fe(II)-heme a</name>
        <dbReference type="ChEBI" id="CHEBI:61715"/>
        <note>low-spin</note>
    </ligand>
    <ligandPart>
        <name>Fe</name>
        <dbReference type="ChEBI" id="CHEBI:18248"/>
    </ligandPart>
</feature>
<feature type="binding site" evidence="2">
    <location>
        <position position="441"/>
    </location>
    <ligand>
        <name>Na(+)</name>
        <dbReference type="ChEBI" id="CHEBI:29101"/>
    </ligand>
</feature>
<feature type="cross-link" description="1'-histidyl-3'-tyrosine (His-Tyr)" evidence="2">
    <location>
        <begin position="240"/>
        <end position="244"/>
    </location>
</feature>
<keyword id="KW-0106">Calcium</keyword>
<keyword id="KW-0186">Copper</keyword>
<keyword id="KW-0249">Electron transport</keyword>
<keyword id="KW-0349">Heme</keyword>
<keyword id="KW-0408">Iron</keyword>
<keyword id="KW-0460">Magnesium</keyword>
<keyword id="KW-0472">Membrane</keyword>
<keyword id="KW-0479">Metal-binding</keyword>
<keyword id="KW-0496">Mitochondrion</keyword>
<keyword id="KW-0999">Mitochondrion inner membrane</keyword>
<keyword id="KW-0679">Respiratory chain</keyword>
<keyword id="KW-0915">Sodium</keyword>
<keyword id="KW-1278">Translocase</keyword>
<keyword id="KW-0812">Transmembrane</keyword>
<keyword id="KW-1133">Transmembrane helix</keyword>
<keyword id="KW-0813">Transport</keyword>
<organism>
    <name type="scientific">Formosania lacustris</name>
    <name type="common">Oriental stream loach</name>
    <name type="synonym">Crossostoma lacustre</name>
    <dbReference type="NCBI Taxonomy" id="7980"/>
    <lineage>
        <taxon>Eukaryota</taxon>
        <taxon>Metazoa</taxon>
        <taxon>Chordata</taxon>
        <taxon>Craniata</taxon>
        <taxon>Vertebrata</taxon>
        <taxon>Euteleostomi</taxon>
        <taxon>Actinopterygii</taxon>
        <taxon>Neopterygii</taxon>
        <taxon>Teleostei</taxon>
        <taxon>Ostariophysi</taxon>
        <taxon>Cypriniformes</taxon>
        <taxon>Gastromyzontidae</taxon>
        <taxon>Formosania</taxon>
    </lineage>
</organism>
<comment type="function">
    <text evidence="3">Component of the cytochrome c oxidase, the last enzyme in the mitochondrial electron transport chain which drives oxidative phosphorylation. The respiratory chain contains 3 multisubunit complexes succinate dehydrogenase (complex II, CII), ubiquinol-cytochrome c oxidoreductase (cytochrome b-c1 complex, complex III, CIII) and cytochrome c oxidase (complex IV, CIV), that cooperate to transfer electrons derived from NADH and succinate to molecular oxygen, creating an electrochemical gradient over the inner membrane that drives transmembrane transport and the ATP synthase. Cytochrome c oxidase is the component of the respiratory chain that catalyzes the reduction of oxygen to water. Electrons originating from reduced cytochrome c in the intermembrane space (IMS) are transferred via the dinuclear copper A center (CU(A)) of subunit 2 and heme A of subunit 1 to the active site in subunit 1, a binuclear center (BNC) formed by heme A3 and copper B (CU(B)). The BNC reduces molecular oxygen to 2 water molecules using 4 electrons from cytochrome c in the IMS and 4 protons from the mitochondrial matrix.</text>
</comment>
<comment type="catalytic activity">
    <reaction evidence="3">
        <text>4 Fe(II)-[cytochrome c] + O2 + 8 H(+)(in) = 4 Fe(III)-[cytochrome c] + 2 H2O + 4 H(+)(out)</text>
        <dbReference type="Rhea" id="RHEA:11436"/>
        <dbReference type="Rhea" id="RHEA-COMP:10350"/>
        <dbReference type="Rhea" id="RHEA-COMP:14399"/>
        <dbReference type="ChEBI" id="CHEBI:15377"/>
        <dbReference type="ChEBI" id="CHEBI:15378"/>
        <dbReference type="ChEBI" id="CHEBI:15379"/>
        <dbReference type="ChEBI" id="CHEBI:29033"/>
        <dbReference type="ChEBI" id="CHEBI:29034"/>
        <dbReference type="EC" id="7.1.1.9"/>
    </reaction>
    <physiologicalReaction direction="left-to-right" evidence="3">
        <dbReference type="Rhea" id="RHEA:11437"/>
    </physiologicalReaction>
</comment>
<comment type="cofactor">
    <cofactor evidence="2">
        <name>heme</name>
        <dbReference type="ChEBI" id="CHEBI:30413"/>
    </cofactor>
    <text evidence="2">Binds 2 heme A groups non-covalently per subunit.</text>
</comment>
<comment type="cofactor">
    <cofactor evidence="2">
        <name>Cu cation</name>
        <dbReference type="ChEBI" id="CHEBI:23378"/>
    </cofactor>
    <text evidence="2">Binds a copper B center.</text>
</comment>
<comment type="pathway">
    <text evidence="3">Energy metabolism; oxidative phosphorylation.</text>
</comment>
<comment type="subunit">
    <text evidence="1 2">Component of the cytochrome c oxidase (complex IV, CIV), a multisubunit enzyme composed of 14 subunits. The complex is composed of a catalytic core of 3 subunits MT-CO1, MT-CO2 and MT-CO3, encoded in the mitochondrial DNA, and 11 supernumerary subunits COX4I, COX5A, COX5B, COX6A, COX6B, COX6C, COX7A, COX7B, COX7C, COX8 and NDUFA4, which are encoded in the nuclear genome. The complex exists as a monomer or a dimer and forms supercomplexes (SCs) in the inner mitochondrial membrane with NADH-ubiquinone oxidoreductase (complex I, CI) and ubiquinol-cytochrome c oxidoreductase (cytochrome b-c1 complex, complex III, CIII), resulting in different assemblies (supercomplex SCI(1)III(2)IV(1) and megacomplex MCI(2)III(2)IV(2)) (By similarity). As a newly synthesized protein, rapidly incorporates into a multi-subunit assembly intermediate in the inner membrane, called MITRAC (mitochondrial translation regulation assembly intermediate of cytochrome c oxidase) complex, whose core components are COA3/MITRAC12 and COX14. Within the MITRAC complex, interacts with COA3 and with SMIM20/MITRAC7; the interaction with SMIM20 stabilizes the newly synthesized MT-CO1 and prevents its premature turnover. Interacts with TMEM177 in a COX20-dependent manner (By similarity).</text>
</comment>
<comment type="subcellular location">
    <subcellularLocation>
        <location evidence="2">Mitochondrion inner membrane</location>
        <topology evidence="2">Multi-pass membrane protein</topology>
    </subcellularLocation>
</comment>
<comment type="similarity">
    <text evidence="4">Belongs to the heme-copper respiratory oxidase family.</text>
</comment>
<gene>
    <name type="primary">mt-co1</name>
    <name type="synonym">coi</name>
    <name type="synonym">coxi</name>
    <name type="synonym">mtco1</name>
</gene>
<evidence type="ECO:0000250" key="1">
    <source>
        <dbReference type="UniProtKB" id="P00395"/>
    </source>
</evidence>
<evidence type="ECO:0000250" key="2">
    <source>
        <dbReference type="UniProtKB" id="P00396"/>
    </source>
</evidence>
<evidence type="ECO:0000250" key="3">
    <source>
        <dbReference type="UniProtKB" id="P00401"/>
    </source>
</evidence>
<evidence type="ECO:0000305" key="4"/>
<proteinExistence type="inferred from homology"/>
<geneLocation type="mitochondrion"/>
<sequence length="516" mass="56953">MAITRWFFSTNHKDIGTLYLVFGAWAGMVGTALSLLIRAELNQPGALLGDDQIYNVIVTAHAFVMIFFMVMPILIGGFGNWLVPLMIGAPHMAFPRMNNMSFWLLPPSFLLLLASSGVEAGAGTGWTVYPPLAGNLAHAGASVDLTIFSLHLAGVSSILGAINFITTTINMKPPALSQYQTPLFVWAVLITAVLLLLSLPVLAAGITMLLTDRNLNTTFFDPAGGGDPILYQHLFWFFGHPEVYILILPGFGIISHVVAYYAGKKEPFGYMGMVWAMMAIGLLGFIVWAHHMFTVGMDVDTRAYFTSATMIIAIPTGVKVFSWLATLHGGTIKWDTPMLWALGFIFLFTVGGLTGIVLSNSSLDIVLHDTYYVVAHFHYVLSMGAVFAIMAGFVHWFPLFTGFSLHDTWTKIHFGVMFIGVNLTFFPQHFLGLAGMPRRYSDYPDAYTLWNTVSSIGSLISLVAVIIFLFILWEAFASKRQVMSVELTMTNVEWLHGCPPPYHTFEEPAFVQVRSN</sequence>
<name>COX1_FORLA</name>
<dbReference type="EC" id="7.1.1.9"/>
<dbReference type="EMBL" id="M91245">
    <property type="protein sequence ID" value="AAB96813.1"/>
    <property type="molecule type" value="Genomic_DNA"/>
</dbReference>
<dbReference type="PIR" id="S35464">
    <property type="entry name" value="S35464"/>
</dbReference>
<dbReference type="SMR" id="P34188"/>
<dbReference type="CTD" id="4512"/>
<dbReference type="UniPathway" id="UPA00705"/>
<dbReference type="GO" id="GO:0005743">
    <property type="term" value="C:mitochondrial inner membrane"/>
    <property type="evidence" value="ECO:0007669"/>
    <property type="project" value="UniProtKB-SubCell"/>
</dbReference>
<dbReference type="GO" id="GO:0045277">
    <property type="term" value="C:respiratory chain complex IV"/>
    <property type="evidence" value="ECO:0000250"/>
    <property type="project" value="UniProtKB"/>
</dbReference>
<dbReference type="GO" id="GO:0004129">
    <property type="term" value="F:cytochrome-c oxidase activity"/>
    <property type="evidence" value="ECO:0007669"/>
    <property type="project" value="UniProtKB-EC"/>
</dbReference>
<dbReference type="GO" id="GO:0020037">
    <property type="term" value="F:heme binding"/>
    <property type="evidence" value="ECO:0007669"/>
    <property type="project" value="InterPro"/>
</dbReference>
<dbReference type="GO" id="GO:0046872">
    <property type="term" value="F:metal ion binding"/>
    <property type="evidence" value="ECO:0007669"/>
    <property type="project" value="UniProtKB-KW"/>
</dbReference>
<dbReference type="GO" id="GO:0015990">
    <property type="term" value="P:electron transport coupled proton transport"/>
    <property type="evidence" value="ECO:0007669"/>
    <property type="project" value="TreeGrafter"/>
</dbReference>
<dbReference type="GO" id="GO:0006123">
    <property type="term" value="P:mitochondrial electron transport, cytochrome c to oxygen"/>
    <property type="evidence" value="ECO:0007669"/>
    <property type="project" value="TreeGrafter"/>
</dbReference>
<dbReference type="CDD" id="cd01663">
    <property type="entry name" value="Cyt_c_Oxidase_I"/>
    <property type="match status" value="1"/>
</dbReference>
<dbReference type="FunFam" id="1.20.210.10:FF:000001">
    <property type="entry name" value="Cytochrome c oxidase subunit 1"/>
    <property type="match status" value="1"/>
</dbReference>
<dbReference type="Gene3D" id="1.20.210.10">
    <property type="entry name" value="Cytochrome c oxidase-like, subunit I domain"/>
    <property type="match status" value="1"/>
</dbReference>
<dbReference type="InterPro" id="IPR023616">
    <property type="entry name" value="Cyt_c_oxase-like_su1_dom"/>
</dbReference>
<dbReference type="InterPro" id="IPR036927">
    <property type="entry name" value="Cyt_c_oxase-like_su1_sf"/>
</dbReference>
<dbReference type="InterPro" id="IPR000883">
    <property type="entry name" value="Cyt_C_Oxase_1"/>
</dbReference>
<dbReference type="InterPro" id="IPR023615">
    <property type="entry name" value="Cyt_c_Oxase_su1_BS"/>
</dbReference>
<dbReference type="InterPro" id="IPR033944">
    <property type="entry name" value="Cyt_c_oxase_su1_dom"/>
</dbReference>
<dbReference type="PANTHER" id="PTHR10422">
    <property type="entry name" value="CYTOCHROME C OXIDASE SUBUNIT 1"/>
    <property type="match status" value="1"/>
</dbReference>
<dbReference type="PANTHER" id="PTHR10422:SF18">
    <property type="entry name" value="CYTOCHROME C OXIDASE SUBUNIT 1"/>
    <property type="match status" value="1"/>
</dbReference>
<dbReference type="Pfam" id="PF00115">
    <property type="entry name" value="COX1"/>
    <property type="match status" value="1"/>
</dbReference>
<dbReference type="PRINTS" id="PR01165">
    <property type="entry name" value="CYCOXIDASEI"/>
</dbReference>
<dbReference type="SUPFAM" id="SSF81442">
    <property type="entry name" value="Cytochrome c oxidase subunit I-like"/>
    <property type="match status" value="1"/>
</dbReference>
<dbReference type="PROSITE" id="PS50855">
    <property type="entry name" value="COX1"/>
    <property type="match status" value="1"/>
</dbReference>
<dbReference type="PROSITE" id="PS00077">
    <property type="entry name" value="COX1_CUB"/>
    <property type="match status" value="1"/>
</dbReference>
<protein>
    <recommendedName>
        <fullName>Cytochrome c oxidase subunit 1</fullName>
        <ecNumber>7.1.1.9</ecNumber>
    </recommendedName>
    <alternativeName>
        <fullName>Cytochrome c oxidase polypeptide I</fullName>
    </alternativeName>
</protein>